<keyword id="KW-0004">4Fe-4S</keyword>
<keyword id="KW-0997">Cell inner membrane</keyword>
<keyword id="KW-1003">Cell membrane</keyword>
<keyword id="KW-0408">Iron</keyword>
<keyword id="KW-0411">Iron-sulfur</keyword>
<keyword id="KW-0472">Membrane</keyword>
<keyword id="KW-0479">Metal-binding</keyword>
<keyword id="KW-0520">NAD</keyword>
<keyword id="KW-0874">Quinone</keyword>
<keyword id="KW-1278">Translocase</keyword>
<keyword id="KW-0813">Transport</keyword>
<keyword id="KW-0830">Ubiquinone</keyword>
<evidence type="ECO:0000250" key="1"/>
<evidence type="ECO:0000255" key="2">
    <source>
        <dbReference type="HAMAP-Rule" id="MF_01356"/>
    </source>
</evidence>
<accession>A8GX77</accession>
<organism>
    <name type="scientific">Rickettsia bellii (strain OSU 85-389)</name>
    <dbReference type="NCBI Taxonomy" id="391896"/>
    <lineage>
        <taxon>Bacteria</taxon>
        <taxon>Pseudomonadati</taxon>
        <taxon>Pseudomonadota</taxon>
        <taxon>Alphaproteobacteria</taxon>
        <taxon>Rickettsiales</taxon>
        <taxon>Rickettsiaceae</taxon>
        <taxon>Rickettsieae</taxon>
        <taxon>Rickettsia</taxon>
        <taxon>belli group</taxon>
    </lineage>
</organism>
<feature type="chain" id="PRO_0000358472" description="NADH-quinone oxidoreductase subunit B">
    <location>
        <begin position="1"/>
        <end position="174"/>
    </location>
</feature>
<feature type="binding site" evidence="2">
    <location>
        <position position="47"/>
    </location>
    <ligand>
        <name>[4Fe-4S] cluster</name>
        <dbReference type="ChEBI" id="CHEBI:49883"/>
    </ligand>
</feature>
<feature type="binding site" evidence="2">
    <location>
        <position position="48"/>
    </location>
    <ligand>
        <name>[4Fe-4S] cluster</name>
        <dbReference type="ChEBI" id="CHEBI:49883"/>
    </ligand>
</feature>
<feature type="binding site" evidence="2">
    <location>
        <position position="112"/>
    </location>
    <ligand>
        <name>[4Fe-4S] cluster</name>
        <dbReference type="ChEBI" id="CHEBI:49883"/>
    </ligand>
</feature>
<feature type="binding site" evidence="2">
    <location>
        <position position="142"/>
    </location>
    <ligand>
        <name>[4Fe-4S] cluster</name>
        <dbReference type="ChEBI" id="CHEBI:49883"/>
    </ligand>
</feature>
<proteinExistence type="inferred from homology"/>
<dbReference type="EC" id="7.1.1.-" evidence="2"/>
<dbReference type="EMBL" id="CP000849">
    <property type="protein sequence ID" value="ABV79477.1"/>
    <property type="molecule type" value="Genomic_DNA"/>
</dbReference>
<dbReference type="RefSeq" id="WP_012152061.1">
    <property type="nucleotide sequence ID" value="NC_009883.1"/>
</dbReference>
<dbReference type="SMR" id="A8GX77"/>
<dbReference type="KEGG" id="rbo:A1I_05775"/>
<dbReference type="HOGENOM" id="CLU_055737_7_3_5"/>
<dbReference type="GO" id="GO:0005886">
    <property type="term" value="C:plasma membrane"/>
    <property type="evidence" value="ECO:0007669"/>
    <property type="project" value="UniProtKB-SubCell"/>
</dbReference>
<dbReference type="GO" id="GO:0045271">
    <property type="term" value="C:respiratory chain complex I"/>
    <property type="evidence" value="ECO:0007669"/>
    <property type="project" value="TreeGrafter"/>
</dbReference>
<dbReference type="GO" id="GO:0051539">
    <property type="term" value="F:4 iron, 4 sulfur cluster binding"/>
    <property type="evidence" value="ECO:0007669"/>
    <property type="project" value="UniProtKB-KW"/>
</dbReference>
<dbReference type="GO" id="GO:0005506">
    <property type="term" value="F:iron ion binding"/>
    <property type="evidence" value="ECO:0007669"/>
    <property type="project" value="UniProtKB-UniRule"/>
</dbReference>
<dbReference type="GO" id="GO:0008137">
    <property type="term" value="F:NADH dehydrogenase (ubiquinone) activity"/>
    <property type="evidence" value="ECO:0007669"/>
    <property type="project" value="InterPro"/>
</dbReference>
<dbReference type="GO" id="GO:0050136">
    <property type="term" value="F:NADH:ubiquinone reductase (non-electrogenic) activity"/>
    <property type="evidence" value="ECO:0007669"/>
    <property type="project" value="UniProtKB-UniRule"/>
</dbReference>
<dbReference type="GO" id="GO:0048038">
    <property type="term" value="F:quinone binding"/>
    <property type="evidence" value="ECO:0007669"/>
    <property type="project" value="UniProtKB-KW"/>
</dbReference>
<dbReference type="GO" id="GO:0009060">
    <property type="term" value="P:aerobic respiration"/>
    <property type="evidence" value="ECO:0007669"/>
    <property type="project" value="TreeGrafter"/>
</dbReference>
<dbReference type="GO" id="GO:0015990">
    <property type="term" value="P:electron transport coupled proton transport"/>
    <property type="evidence" value="ECO:0007669"/>
    <property type="project" value="TreeGrafter"/>
</dbReference>
<dbReference type="FunFam" id="3.40.50.12280:FF:000001">
    <property type="entry name" value="NADH-quinone oxidoreductase subunit B 2"/>
    <property type="match status" value="1"/>
</dbReference>
<dbReference type="Gene3D" id="3.40.50.12280">
    <property type="match status" value="1"/>
</dbReference>
<dbReference type="HAMAP" id="MF_01356">
    <property type="entry name" value="NDH1_NuoB"/>
    <property type="match status" value="1"/>
</dbReference>
<dbReference type="InterPro" id="IPR006137">
    <property type="entry name" value="NADH_UbQ_OxRdtase-like_20kDa"/>
</dbReference>
<dbReference type="InterPro" id="IPR006138">
    <property type="entry name" value="NADH_UQ_OxRdtase_20Kd_su"/>
</dbReference>
<dbReference type="NCBIfam" id="TIGR01957">
    <property type="entry name" value="nuoB_fam"/>
    <property type="match status" value="1"/>
</dbReference>
<dbReference type="NCBIfam" id="NF005012">
    <property type="entry name" value="PRK06411.1"/>
    <property type="match status" value="1"/>
</dbReference>
<dbReference type="PANTHER" id="PTHR11995">
    <property type="entry name" value="NADH DEHYDROGENASE"/>
    <property type="match status" value="1"/>
</dbReference>
<dbReference type="PANTHER" id="PTHR11995:SF14">
    <property type="entry name" value="NADH DEHYDROGENASE [UBIQUINONE] IRON-SULFUR PROTEIN 7, MITOCHONDRIAL"/>
    <property type="match status" value="1"/>
</dbReference>
<dbReference type="Pfam" id="PF01058">
    <property type="entry name" value="Oxidored_q6"/>
    <property type="match status" value="1"/>
</dbReference>
<dbReference type="SUPFAM" id="SSF56770">
    <property type="entry name" value="HydA/Nqo6-like"/>
    <property type="match status" value="1"/>
</dbReference>
<dbReference type="PROSITE" id="PS01150">
    <property type="entry name" value="COMPLEX1_20K"/>
    <property type="match status" value="1"/>
</dbReference>
<reference key="1">
    <citation type="submission" date="2007-09" db="EMBL/GenBank/DDBJ databases">
        <title>Complete genome sequencing of Rickettsia bellii.</title>
        <authorList>
            <person name="Madan A."/>
            <person name="Lee H."/>
            <person name="Madan A."/>
            <person name="Yoon J.-G."/>
            <person name="Ryu G.-Y."/>
            <person name="Dasch G."/>
            <person name="Ereemeva M."/>
        </authorList>
    </citation>
    <scope>NUCLEOTIDE SEQUENCE [LARGE SCALE GENOMIC DNA]</scope>
    <source>
        <strain>OSU 85-389</strain>
    </source>
</reference>
<name>NUOB_RICB8</name>
<protein>
    <recommendedName>
        <fullName evidence="2">NADH-quinone oxidoreductase subunit B</fullName>
        <ecNumber evidence="2">7.1.1.-</ecNumber>
    </recommendedName>
    <alternativeName>
        <fullName evidence="2">NADH dehydrogenase I subunit B</fullName>
    </alternativeName>
    <alternativeName>
        <fullName evidence="2">NDH-1 subunit B</fullName>
    </alternativeName>
</protein>
<sequence length="174" mass="19681">MHNNFYQEDELLNNELSNRGFLLTKVDDVIGWARSNSLWPMTFGLACCAVEMMQAAASRYDMDRFGMLFRPSPRQSDLMIVAGTLTNKMAPALRKVYDQMAEPKWVLSMGSCANGGGYYHFSYSVVRGCDRIVPVDVYVPGCPPTAEALIYGLMQLQKKIKRTTGFKYDARKNH</sequence>
<gene>
    <name evidence="2" type="primary">nuoB</name>
    <name type="ordered locus">A1I_05775</name>
</gene>
<comment type="function">
    <text evidence="1">NDH-1 shuttles electrons from NADH, via FMN and iron-sulfur (Fe-S) centers, to quinones in the respiratory chain. Couples the redox reaction to proton translocation (for every two electrons transferred, four hydrogen ions are translocated across the cytoplasmic membrane), and thus conserves the redox energy in a proton gradient (By similarity).</text>
</comment>
<comment type="catalytic activity">
    <reaction evidence="2">
        <text>a quinone + NADH + 5 H(+)(in) = a quinol + NAD(+) + 4 H(+)(out)</text>
        <dbReference type="Rhea" id="RHEA:57888"/>
        <dbReference type="ChEBI" id="CHEBI:15378"/>
        <dbReference type="ChEBI" id="CHEBI:24646"/>
        <dbReference type="ChEBI" id="CHEBI:57540"/>
        <dbReference type="ChEBI" id="CHEBI:57945"/>
        <dbReference type="ChEBI" id="CHEBI:132124"/>
    </reaction>
</comment>
<comment type="cofactor">
    <cofactor evidence="2">
        <name>[4Fe-4S] cluster</name>
        <dbReference type="ChEBI" id="CHEBI:49883"/>
    </cofactor>
    <text evidence="2">Binds 1 [4Fe-4S] cluster.</text>
</comment>
<comment type="subunit">
    <text evidence="2">NDH-1 is composed of 14 different subunits. Subunits NuoB, C, D, E, F, and G constitute the peripheral sector of the complex.</text>
</comment>
<comment type="subcellular location">
    <subcellularLocation>
        <location evidence="2">Cell inner membrane</location>
        <topology evidence="2">Peripheral membrane protein</topology>
        <orientation evidence="2">Cytoplasmic side</orientation>
    </subcellularLocation>
</comment>
<comment type="similarity">
    <text evidence="2">Belongs to the complex I 20 kDa subunit family.</text>
</comment>